<dbReference type="EMBL" id="CP000551">
    <property type="protein sequence ID" value="ABM70202.1"/>
    <property type="molecule type" value="Genomic_DNA"/>
</dbReference>
<dbReference type="RefSeq" id="WP_011818358.1">
    <property type="nucleotide sequence ID" value="NC_008816.1"/>
</dbReference>
<dbReference type="SMR" id="A2BQZ1"/>
<dbReference type="STRING" id="146891.A9601_09181"/>
<dbReference type="KEGG" id="pmb:A9601_09181"/>
<dbReference type="eggNOG" id="COG0632">
    <property type="taxonomic scope" value="Bacteria"/>
</dbReference>
<dbReference type="HOGENOM" id="CLU_087936_0_0_3"/>
<dbReference type="OrthoDB" id="5293449at2"/>
<dbReference type="Proteomes" id="UP000002590">
    <property type="component" value="Chromosome"/>
</dbReference>
<dbReference type="GO" id="GO:0005737">
    <property type="term" value="C:cytoplasm"/>
    <property type="evidence" value="ECO:0007669"/>
    <property type="project" value="UniProtKB-SubCell"/>
</dbReference>
<dbReference type="GO" id="GO:0048476">
    <property type="term" value="C:Holliday junction resolvase complex"/>
    <property type="evidence" value="ECO:0007669"/>
    <property type="project" value="UniProtKB-UniRule"/>
</dbReference>
<dbReference type="GO" id="GO:0005524">
    <property type="term" value="F:ATP binding"/>
    <property type="evidence" value="ECO:0007669"/>
    <property type="project" value="InterPro"/>
</dbReference>
<dbReference type="GO" id="GO:0000400">
    <property type="term" value="F:four-way junction DNA binding"/>
    <property type="evidence" value="ECO:0007669"/>
    <property type="project" value="UniProtKB-UniRule"/>
</dbReference>
<dbReference type="GO" id="GO:0009378">
    <property type="term" value="F:four-way junction helicase activity"/>
    <property type="evidence" value="ECO:0007669"/>
    <property type="project" value="InterPro"/>
</dbReference>
<dbReference type="GO" id="GO:0006310">
    <property type="term" value="P:DNA recombination"/>
    <property type="evidence" value="ECO:0007669"/>
    <property type="project" value="UniProtKB-UniRule"/>
</dbReference>
<dbReference type="GO" id="GO:0006281">
    <property type="term" value="P:DNA repair"/>
    <property type="evidence" value="ECO:0007669"/>
    <property type="project" value="UniProtKB-UniRule"/>
</dbReference>
<dbReference type="Gene3D" id="1.10.150.20">
    <property type="entry name" value="5' to 3' exonuclease, C-terminal subdomain"/>
    <property type="match status" value="1"/>
</dbReference>
<dbReference type="Gene3D" id="2.40.50.140">
    <property type="entry name" value="Nucleic acid-binding proteins"/>
    <property type="match status" value="1"/>
</dbReference>
<dbReference type="HAMAP" id="MF_00031">
    <property type="entry name" value="DNA_HJ_migration_RuvA"/>
    <property type="match status" value="1"/>
</dbReference>
<dbReference type="InterPro" id="IPR013849">
    <property type="entry name" value="DNA_helicase_Holl-junc_RuvA_I"/>
</dbReference>
<dbReference type="InterPro" id="IPR012340">
    <property type="entry name" value="NA-bd_OB-fold"/>
</dbReference>
<dbReference type="InterPro" id="IPR000085">
    <property type="entry name" value="RuvA"/>
</dbReference>
<dbReference type="InterPro" id="IPR010994">
    <property type="entry name" value="RuvA_2-like"/>
</dbReference>
<dbReference type="NCBIfam" id="TIGR00084">
    <property type="entry name" value="ruvA"/>
    <property type="match status" value="1"/>
</dbReference>
<dbReference type="Pfam" id="PF14520">
    <property type="entry name" value="HHH_5"/>
    <property type="match status" value="1"/>
</dbReference>
<dbReference type="Pfam" id="PF01330">
    <property type="entry name" value="RuvA_N"/>
    <property type="match status" value="1"/>
</dbReference>
<dbReference type="SUPFAM" id="SSF50249">
    <property type="entry name" value="Nucleic acid-binding proteins"/>
    <property type="match status" value="1"/>
</dbReference>
<dbReference type="SUPFAM" id="SSF47781">
    <property type="entry name" value="RuvA domain 2-like"/>
    <property type="match status" value="1"/>
</dbReference>
<organism>
    <name type="scientific">Prochlorococcus marinus (strain AS9601)</name>
    <dbReference type="NCBI Taxonomy" id="146891"/>
    <lineage>
        <taxon>Bacteria</taxon>
        <taxon>Bacillati</taxon>
        <taxon>Cyanobacteriota</taxon>
        <taxon>Cyanophyceae</taxon>
        <taxon>Synechococcales</taxon>
        <taxon>Prochlorococcaceae</taxon>
        <taxon>Prochlorococcus</taxon>
    </lineage>
</organism>
<gene>
    <name evidence="1" type="primary">ruvA</name>
    <name type="ordered locus">A9601_09181</name>
</gene>
<feature type="chain" id="PRO_1000002515" description="Holliday junction branch migration complex subunit RuvA">
    <location>
        <begin position="1"/>
        <end position="225"/>
    </location>
</feature>
<feature type="region of interest" description="Domain I" evidence="1">
    <location>
        <begin position="1"/>
        <end position="71"/>
    </location>
</feature>
<feature type="region of interest" description="Domain II" evidence="1">
    <location>
        <begin position="72"/>
        <end position="150"/>
    </location>
</feature>
<feature type="region of interest" description="Flexible linker" evidence="1">
    <location>
        <begin position="151"/>
        <end position="161"/>
    </location>
</feature>
<feature type="region of interest" description="Domain III" evidence="1">
    <location>
        <begin position="161"/>
        <end position="225"/>
    </location>
</feature>
<accession>A2BQZ1</accession>
<name>RUVA_PROMS</name>
<sequence length="225" mass="25941">MISWINGDLVDLWQTNQKSFVLINCQGLGYEIQILESFFLKLKTNQISTKNITLWIKHIKKEDSDLLFGFTSKDQKNFFIEILSIRGVGSQIGIGILNKFSISEVINAIKTQDKKLICSVPGIGQKMSERLILELKSKFKSEILSEEEKSKDEFEIKDPEIIKMIEDLQLTLQSLSYKNKEINTILPIIIKEIDHLGKKENSLSFEKLLKLAMHYLDEDSSNKDR</sequence>
<keyword id="KW-0963">Cytoplasm</keyword>
<keyword id="KW-0227">DNA damage</keyword>
<keyword id="KW-0233">DNA recombination</keyword>
<keyword id="KW-0234">DNA repair</keyword>
<keyword id="KW-0238">DNA-binding</keyword>
<evidence type="ECO:0000255" key="1">
    <source>
        <dbReference type="HAMAP-Rule" id="MF_00031"/>
    </source>
</evidence>
<reference key="1">
    <citation type="journal article" date="2007" name="PLoS Genet.">
        <title>Patterns and implications of gene gain and loss in the evolution of Prochlorococcus.</title>
        <authorList>
            <person name="Kettler G.C."/>
            <person name="Martiny A.C."/>
            <person name="Huang K."/>
            <person name="Zucker J."/>
            <person name="Coleman M.L."/>
            <person name="Rodrigue S."/>
            <person name="Chen F."/>
            <person name="Lapidus A."/>
            <person name="Ferriera S."/>
            <person name="Johnson J."/>
            <person name="Steglich C."/>
            <person name="Church G.M."/>
            <person name="Richardson P."/>
            <person name="Chisholm S.W."/>
        </authorList>
    </citation>
    <scope>NUCLEOTIDE SEQUENCE [LARGE SCALE GENOMIC DNA]</scope>
    <source>
        <strain>AS9601</strain>
    </source>
</reference>
<comment type="function">
    <text evidence="1">The RuvA-RuvB-RuvC complex processes Holliday junction (HJ) DNA during genetic recombination and DNA repair, while the RuvA-RuvB complex plays an important role in the rescue of blocked DNA replication forks via replication fork reversal (RFR). RuvA specifically binds to HJ cruciform DNA, conferring on it an open structure. The RuvB hexamer acts as an ATP-dependent pump, pulling dsDNA into and through the RuvAB complex. HJ branch migration allows RuvC to scan DNA until it finds its consensus sequence, where it cleaves and resolves the cruciform DNA.</text>
</comment>
<comment type="subunit">
    <text evidence="1">Homotetramer. Forms an RuvA(8)-RuvB(12)-Holliday junction (HJ) complex. HJ DNA is sandwiched between 2 RuvA tetramers; dsDNA enters through RuvA and exits via RuvB. An RuvB hexamer assembles on each DNA strand where it exits the tetramer. Each RuvB hexamer is contacted by two RuvA subunits (via domain III) on 2 adjacent RuvB subunits; this complex drives branch migration. In the full resolvosome a probable DNA-RuvA(4)-RuvB(12)-RuvC(2) complex forms which resolves the HJ.</text>
</comment>
<comment type="subcellular location">
    <subcellularLocation>
        <location evidence="1">Cytoplasm</location>
    </subcellularLocation>
</comment>
<comment type="domain">
    <text evidence="1">Has three domains with a flexible linker between the domains II and III and assumes an 'L' shape. Domain III is highly mobile and contacts RuvB.</text>
</comment>
<comment type="similarity">
    <text evidence="1">Belongs to the RuvA family.</text>
</comment>
<proteinExistence type="inferred from homology"/>
<protein>
    <recommendedName>
        <fullName evidence="1">Holliday junction branch migration complex subunit RuvA</fullName>
    </recommendedName>
</protein>